<keyword id="KW-0963">Cytoplasm</keyword>
<keyword id="KW-0238">DNA-binding</keyword>
<keyword id="KW-0240">DNA-directed RNA polymerase</keyword>
<keyword id="KW-0548">Nucleotidyltransferase</keyword>
<keyword id="KW-1185">Reference proteome</keyword>
<keyword id="KW-0804">Transcription</keyword>
<keyword id="KW-0808">Transferase</keyword>
<accession>C5A207</accession>
<name>RPO1C_THEGJ</name>
<protein>
    <recommendedName>
        <fullName evidence="1">DNA-directed RNA polymerase subunit Rpo1C</fullName>
        <ecNumber evidence="1">2.7.7.6</ecNumber>
    </recommendedName>
    <alternativeName>
        <fullName evidence="1">DNA-directed RNA polymerase subunit A''</fullName>
    </alternativeName>
</protein>
<reference key="1">
    <citation type="journal article" date="2007" name="Genome Biol.">
        <title>Genome analysis and genome-wide proteomics of Thermococcus gammatolerans, the most radioresistant organism known amongst the Archaea.</title>
        <authorList>
            <person name="Zivanovic Y."/>
            <person name="Armengaud J."/>
            <person name="Lagorce A."/>
            <person name="Leplat C."/>
            <person name="Guerin P."/>
            <person name="Dutertre M."/>
            <person name="Anthouard V."/>
            <person name="Forterre P."/>
            <person name="Wincker P."/>
            <person name="Confalonieri F."/>
        </authorList>
    </citation>
    <scope>NUCLEOTIDE SEQUENCE [LARGE SCALE GENOMIC DNA]</scope>
    <source>
        <strain>DSM 15229 / JCM 11827 / EJ3</strain>
    </source>
</reference>
<organism>
    <name type="scientific">Thermococcus gammatolerans (strain DSM 15229 / JCM 11827 / EJ3)</name>
    <dbReference type="NCBI Taxonomy" id="593117"/>
    <lineage>
        <taxon>Archaea</taxon>
        <taxon>Methanobacteriati</taxon>
        <taxon>Methanobacteriota</taxon>
        <taxon>Thermococci</taxon>
        <taxon>Thermococcales</taxon>
        <taxon>Thermococcaceae</taxon>
        <taxon>Thermococcus</taxon>
    </lineage>
</organism>
<gene>
    <name evidence="1" type="primary">rpo1C</name>
    <name evidence="1" type="synonym">rpoA2</name>
    <name type="ordered locus">TGAM_1924</name>
</gene>
<comment type="function">
    <text evidence="1">DNA-dependent RNA polymerase (RNAP) catalyzes the transcription of DNA into RNA using the four ribonucleoside triphosphates as substrates. Forms part of the jaw domain.</text>
</comment>
<comment type="catalytic activity">
    <reaction evidence="1">
        <text>RNA(n) + a ribonucleoside 5'-triphosphate = RNA(n+1) + diphosphate</text>
        <dbReference type="Rhea" id="RHEA:21248"/>
        <dbReference type="Rhea" id="RHEA-COMP:14527"/>
        <dbReference type="Rhea" id="RHEA-COMP:17342"/>
        <dbReference type="ChEBI" id="CHEBI:33019"/>
        <dbReference type="ChEBI" id="CHEBI:61557"/>
        <dbReference type="ChEBI" id="CHEBI:140395"/>
        <dbReference type="EC" id="2.7.7.6"/>
    </reaction>
</comment>
<comment type="subunit">
    <text evidence="1">Part of the RNA polymerase complex.</text>
</comment>
<comment type="subcellular location">
    <subcellularLocation>
        <location evidence="1">Cytoplasm</location>
    </subcellularLocation>
</comment>
<comment type="similarity">
    <text evidence="1">Belongs to the RNA polymerase beta' chain family.</text>
</comment>
<feature type="chain" id="PRO_1000205989" description="DNA-directed RNA polymerase subunit Rpo1C">
    <location>
        <begin position="1"/>
        <end position="391"/>
    </location>
</feature>
<evidence type="ECO:0000255" key="1">
    <source>
        <dbReference type="HAMAP-Rule" id="MF_00411"/>
    </source>
</evidence>
<sequence length="391" mass="43874">MVAAKTIKTLVWKSELPDNIKEELYNKLIEYNKKYKLKKAEVEAIIEDAVNEYRKALVEPGEPIGTVAAQSIGEPSTQMTLNTFHYAGVAEINVTLGLPRIIEIVDARKNPSTPVMTVFLDEEHRYDLEKAREVARRIEGTTIENLAREMSIDILNFEFIVEIDPERLEKSGLDMERILKKLSGSFKSAEFEAEGYSLIVRPKKVTKLSDLRKLAEKVKKHRLKGLSGVGKTIIRKEGDEYVIYTEGSNFKQVLKVPGVDPTRTRTNNIWEIADVLGIEAARNAIIEEIVNTMREQGLEVDIRHIMLVADMMTLDGVIRPIGRHGIVGEKSSVLARAAFEITTQHLFEAAERGEVDPLNGVVENVLIGQPVPVGTGIVKLTMNLPLRPQRE</sequence>
<proteinExistence type="inferred from homology"/>
<dbReference type="EC" id="2.7.7.6" evidence="1"/>
<dbReference type="EMBL" id="CP001398">
    <property type="protein sequence ID" value="ACS34426.1"/>
    <property type="molecule type" value="Genomic_DNA"/>
</dbReference>
<dbReference type="RefSeq" id="WP_015859532.1">
    <property type="nucleotide sequence ID" value="NC_012804.1"/>
</dbReference>
<dbReference type="SMR" id="C5A207"/>
<dbReference type="STRING" id="593117.TGAM_1924"/>
<dbReference type="PaxDb" id="593117-TGAM_1924"/>
<dbReference type="GeneID" id="7988328"/>
<dbReference type="KEGG" id="tga:TGAM_1924"/>
<dbReference type="PATRIC" id="fig|593117.10.peg.1934"/>
<dbReference type="eggNOG" id="arCOG04256">
    <property type="taxonomic scope" value="Archaea"/>
</dbReference>
<dbReference type="HOGENOM" id="CLU_037097_1_0_2"/>
<dbReference type="OrthoDB" id="372142at2157"/>
<dbReference type="Proteomes" id="UP000001488">
    <property type="component" value="Chromosome"/>
</dbReference>
<dbReference type="GO" id="GO:0005737">
    <property type="term" value="C:cytoplasm"/>
    <property type="evidence" value="ECO:0007669"/>
    <property type="project" value="UniProtKB-SubCell"/>
</dbReference>
<dbReference type="GO" id="GO:0000428">
    <property type="term" value="C:DNA-directed RNA polymerase complex"/>
    <property type="evidence" value="ECO:0007669"/>
    <property type="project" value="UniProtKB-KW"/>
</dbReference>
<dbReference type="GO" id="GO:0003677">
    <property type="term" value="F:DNA binding"/>
    <property type="evidence" value="ECO:0007669"/>
    <property type="project" value="UniProtKB-UniRule"/>
</dbReference>
<dbReference type="GO" id="GO:0003899">
    <property type="term" value="F:DNA-directed RNA polymerase activity"/>
    <property type="evidence" value="ECO:0007669"/>
    <property type="project" value="UniProtKB-UniRule"/>
</dbReference>
<dbReference type="GO" id="GO:0006351">
    <property type="term" value="P:DNA-templated transcription"/>
    <property type="evidence" value="ECO:0007669"/>
    <property type="project" value="UniProtKB-UniRule"/>
</dbReference>
<dbReference type="CDD" id="cd06528">
    <property type="entry name" value="RNAP_A"/>
    <property type="match status" value="1"/>
</dbReference>
<dbReference type="Gene3D" id="1.10.150.390">
    <property type="match status" value="1"/>
</dbReference>
<dbReference type="HAMAP" id="MF_00411">
    <property type="entry name" value="RNApol_arch_Rpo1C"/>
    <property type="match status" value="1"/>
</dbReference>
<dbReference type="InterPro" id="IPR045867">
    <property type="entry name" value="DNA-dir_RpoC_beta_prime"/>
</dbReference>
<dbReference type="InterPro" id="IPR007081">
    <property type="entry name" value="RNA_pol_Rpb1_5"/>
</dbReference>
<dbReference type="InterPro" id="IPR012757">
    <property type="entry name" value="RPO1C"/>
</dbReference>
<dbReference type="NCBIfam" id="TIGR02389">
    <property type="entry name" value="RNA_pol_rpoA2"/>
    <property type="match status" value="1"/>
</dbReference>
<dbReference type="PANTHER" id="PTHR19376">
    <property type="entry name" value="DNA-DIRECTED RNA POLYMERASE"/>
    <property type="match status" value="1"/>
</dbReference>
<dbReference type="PANTHER" id="PTHR19376:SF32">
    <property type="entry name" value="DNA-DIRECTED RNA POLYMERASE III SUBUNIT RPC1"/>
    <property type="match status" value="1"/>
</dbReference>
<dbReference type="Pfam" id="PF04998">
    <property type="entry name" value="RNA_pol_Rpb1_5"/>
    <property type="match status" value="1"/>
</dbReference>
<dbReference type="SUPFAM" id="SSF64484">
    <property type="entry name" value="beta and beta-prime subunits of DNA dependent RNA-polymerase"/>
    <property type="match status" value="1"/>
</dbReference>